<reference key="1">
    <citation type="journal article" date="2004" name="Nat. Genet.">
        <title>Comparison of genome degradation in Paratyphi A and Typhi, human-restricted serovars of Salmonella enterica that cause typhoid.</title>
        <authorList>
            <person name="McClelland M."/>
            <person name="Sanderson K.E."/>
            <person name="Clifton S.W."/>
            <person name="Latreille P."/>
            <person name="Porwollik S."/>
            <person name="Sabo A."/>
            <person name="Meyer R."/>
            <person name="Bieri T."/>
            <person name="Ozersky P."/>
            <person name="McLellan M."/>
            <person name="Harkins C.R."/>
            <person name="Wang C."/>
            <person name="Nguyen C."/>
            <person name="Berghoff A."/>
            <person name="Elliott G."/>
            <person name="Kohlberg S."/>
            <person name="Strong C."/>
            <person name="Du F."/>
            <person name="Carter J."/>
            <person name="Kremizki C."/>
            <person name="Layman D."/>
            <person name="Leonard S."/>
            <person name="Sun H."/>
            <person name="Fulton L."/>
            <person name="Nash W."/>
            <person name="Miner T."/>
            <person name="Minx P."/>
            <person name="Delehaunty K."/>
            <person name="Fronick C."/>
            <person name="Magrini V."/>
            <person name="Nhan M."/>
            <person name="Warren W."/>
            <person name="Florea L."/>
            <person name="Spieth J."/>
            <person name="Wilson R.K."/>
        </authorList>
    </citation>
    <scope>NUCLEOTIDE SEQUENCE [LARGE SCALE GENOMIC DNA]</scope>
    <source>
        <strain>ATCC 9150 / SARB42</strain>
    </source>
</reference>
<organism>
    <name type="scientific">Salmonella paratyphi A (strain ATCC 9150 / SARB42)</name>
    <dbReference type="NCBI Taxonomy" id="295319"/>
    <lineage>
        <taxon>Bacteria</taxon>
        <taxon>Pseudomonadati</taxon>
        <taxon>Pseudomonadota</taxon>
        <taxon>Gammaproteobacteria</taxon>
        <taxon>Enterobacterales</taxon>
        <taxon>Enterobacteriaceae</taxon>
        <taxon>Salmonella</taxon>
    </lineage>
</organism>
<feature type="chain" id="PRO_0000179792" description="Putative N-acetylmannosamine-6-phosphate 2-epimerase 2">
    <location>
        <begin position="1"/>
        <end position="229"/>
    </location>
</feature>
<name>NANE2_SALPA</name>
<keyword id="KW-0119">Carbohydrate metabolism</keyword>
<keyword id="KW-0413">Isomerase</keyword>
<proteinExistence type="inferred from homology"/>
<evidence type="ECO:0000255" key="1">
    <source>
        <dbReference type="HAMAP-Rule" id="MF_01235"/>
    </source>
</evidence>
<protein>
    <recommendedName>
        <fullName evidence="1">Putative N-acetylmannosamine-6-phosphate 2-epimerase 2</fullName>
        <ecNumber evidence="1">5.1.3.9</ecNumber>
    </recommendedName>
    <alternativeName>
        <fullName evidence="1">ManNAc-6-P epimerase 2</fullName>
    </alternativeName>
</protein>
<comment type="function">
    <text evidence="1">Converts N-acetylmannosamine-6-phosphate (ManNAc-6-P) to N-acetylglucosamine-6-phosphate (GlcNAc-6-P).</text>
</comment>
<comment type="catalytic activity">
    <reaction evidence="1">
        <text>an N-acyl-D-glucosamine 6-phosphate = an N-acyl-D-mannosamine 6-phosphate</text>
        <dbReference type="Rhea" id="RHEA:23932"/>
        <dbReference type="ChEBI" id="CHEBI:57599"/>
        <dbReference type="ChEBI" id="CHEBI:57666"/>
        <dbReference type="EC" id="5.1.3.9"/>
    </reaction>
</comment>
<comment type="pathway">
    <text evidence="1">Amino-sugar metabolism; N-acetylneuraminate degradation; D-fructose 6-phosphate from N-acetylneuraminate: step 3/5.</text>
</comment>
<comment type="similarity">
    <text evidence="1">Belongs to the NanE family.</text>
</comment>
<gene>
    <name evidence="1" type="primary">nanE2</name>
    <name type="ordered locus">SPA3205</name>
</gene>
<accession>Q5PLF1</accession>
<dbReference type="EC" id="5.1.3.9" evidence="1"/>
<dbReference type="EMBL" id="CP000026">
    <property type="protein sequence ID" value="AAV79029.1"/>
    <property type="molecule type" value="Genomic_DNA"/>
</dbReference>
<dbReference type="RefSeq" id="WP_011233189.1">
    <property type="nucleotide sequence ID" value="NC_006511.1"/>
</dbReference>
<dbReference type="SMR" id="Q5PLF1"/>
<dbReference type="KEGG" id="spt:SPA3205"/>
<dbReference type="HOGENOM" id="CLU_086300_0_0_6"/>
<dbReference type="UniPathway" id="UPA00629">
    <property type="reaction ID" value="UER00682"/>
</dbReference>
<dbReference type="Proteomes" id="UP000008185">
    <property type="component" value="Chromosome"/>
</dbReference>
<dbReference type="GO" id="GO:0005829">
    <property type="term" value="C:cytosol"/>
    <property type="evidence" value="ECO:0007669"/>
    <property type="project" value="TreeGrafter"/>
</dbReference>
<dbReference type="GO" id="GO:0047465">
    <property type="term" value="F:N-acylglucosamine-6-phosphate 2-epimerase activity"/>
    <property type="evidence" value="ECO:0007669"/>
    <property type="project" value="UniProtKB-EC"/>
</dbReference>
<dbReference type="GO" id="GO:0005975">
    <property type="term" value="P:carbohydrate metabolic process"/>
    <property type="evidence" value="ECO:0007669"/>
    <property type="project" value="UniProtKB-UniRule"/>
</dbReference>
<dbReference type="GO" id="GO:0006053">
    <property type="term" value="P:N-acetylmannosamine catabolic process"/>
    <property type="evidence" value="ECO:0007669"/>
    <property type="project" value="TreeGrafter"/>
</dbReference>
<dbReference type="GO" id="GO:0019262">
    <property type="term" value="P:N-acetylneuraminate catabolic process"/>
    <property type="evidence" value="ECO:0007669"/>
    <property type="project" value="UniProtKB-UniRule"/>
</dbReference>
<dbReference type="CDD" id="cd04729">
    <property type="entry name" value="NanE"/>
    <property type="match status" value="1"/>
</dbReference>
<dbReference type="FunFam" id="3.20.20.70:FF:000035">
    <property type="entry name" value="Putative N-acetylmannosamine-6-phosphate 2-epimerase"/>
    <property type="match status" value="1"/>
</dbReference>
<dbReference type="Gene3D" id="3.20.20.70">
    <property type="entry name" value="Aldolase class I"/>
    <property type="match status" value="1"/>
</dbReference>
<dbReference type="HAMAP" id="MF_01235">
    <property type="entry name" value="ManNAc6P_epimer"/>
    <property type="match status" value="1"/>
</dbReference>
<dbReference type="InterPro" id="IPR013785">
    <property type="entry name" value="Aldolase_TIM"/>
</dbReference>
<dbReference type="InterPro" id="IPR007260">
    <property type="entry name" value="NanE"/>
</dbReference>
<dbReference type="InterPro" id="IPR011060">
    <property type="entry name" value="RibuloseP-bd_barrel"/>
</dbReference>
<dbReference type="NCBIfam" id="NF002231">
    <property type="entry name" value="PRK01130.1"/>
    <property type="match status" value="1"/>
</dbReference>
<dbReference type="PANTHER" id="PTHR36204">
    <property type="entry name" value="N-ACETYLMANNOSAMINE-6-PHOSPHATE 2-EPIMERASE-RELATED"/>
    <property type="match status" value="1"/>
</dbReference>
<dbReference type="PANTHER" id="PTHR36204:SF1">
    <property type="entry name" value="N-ACETYLMANNOSAMINE-6-PHOSPHATE 2-EPIMERASE-RELATED"/>
    <property type="match status" value="1"/>
</dbReference>
<dbReference type="Pfam" id="PF04131">
    <property type="entry name" value="NanE"/>
    <property type="match status" value="1"/>
</dbReference>
<dbReference type="SUPFAM" id="SSF51366">
    <property type="entry name" value="Ribulose-phoshate binding barrel"/>
    <property type="match status" value="1"/>
</dbReference>
<sequence length="229" mass="23984">MSLLEQLDKNIAASGGLIVSCQPVPGSPLDKPEIVAAMALAAEQAGAVAVRIEGIDNLRVARSLVSVPIIGIIKRDLDDSPVRITPFLDDVDALAQAGAAIIAVDGTARQRPVAVEALLARIHHHHLLAMADCSSVDDGLACQRLGADIIGTTMSGYTTPDTPEEPDLPLVKALHDAGCRVIAEGRYNSPTLAAEAIRYGAWAVTVGSAITRLEHICGWYNDALKKAAS</sequence>